<comment type="catalytic activity">
    <reaction evidence="4">
        <text>L-histidine = trans-urocanate + NH4(+)</text>
        <dbReference type="Rhea" id="RHEA:21232"/>
        <dbReference type="ChEBI" id="CHEBI:17771"/>
        <dbReference type="ChEBI" id="CHEBI:28938"/>
        <dbReference type="ChEBI" id="CHEBI:57595"/>
        <dbReference type="EC" id="4.3.1.3"/>
    </reaction>
</comment>
<comment type="pathway">
    <text>Amino-acid degradation; L-histidine degradation into L-glutamate; N-formimidoyl-L-glutamate from L-histidine: step 1/3.</text>
</comment>
<comment type="PTM">
    <text evidence="1">Contains an active site 4-methylidene-imidazol-5-one (MIO), which is formed autocatalytically by cyclization and dehydration of residues Ala-Ser-Gly.</text>
</comment>
<comment type="similarity">
    <text evidence="5">Belongs to the PAL/histidase family.</text>
</comment>
<organism>
    <name type="scientific">Bos taurus</name>
    <name type="common">Bovine</name>
    <dbReference type="NCBI Taxonomy" id="9913"/>
    <lineage>
        <taxon>Eukaryota</taxon>
        <taxon>Metazoa</taxon>
        <taxon>Chordata</taxon>
        <taxon>Craniata</taxon>
        <taxon>Vertebrata</taxon>
        <taxon>Euteleostomi</taxon>
        <taxon>Mammalia</taxon>
        <taxon>Eutheria</taxon>
        <taxon>Laurasiatheria</taxon>
        <taxon>Artiodactyla</taxon>
        <taxon>Ruminantia</taxon>
        <taxon>Pecora</taxon>
        <taxon>Bovidae</taxon>
        <taxon>Bovinae</taxon>
        <taxon>Bos</taxon>
    </lineage>
</organism>
<evidence type="ECO:0000250" key="1"/>
<evidence type="ECO:0000250" key="2">
    <source>
        <dbReference type="UniProtKB" id="P21213"/>
    </source>
</evidence>
<evidence type="ECO:0000250" key="3">
    <source>
        <dbReference type="UniProtKB" id="P35492"/>
    </source>
</evidence>
<evidence type="ECO:0000255" key="4">
    <source>
        <dbReference type="PROSITE-ProRule" id="PRU10122"/>
    </source>
</evidence>
<evidence type="ECO:0000305" key="5"/>
<dbReference type="EC" id="4.3.1.3"/>
<dbReference type="EMBL" id="BC134685">
    <property type="protein sequence ID" value="AAI34686.1"/>
    <property type="molecule type" value="mRNA"/>
</dbReference>
<dbReference type="RefSeq" id="NP_001098910.1">
    <property type="nucleotide sequence ID" value="NM_001105440.1"/>
</dbReference>
<dbReference type="SMR" id="A7YWP4"/>
<dbReference type="FunCoup" id="A7YWP4">
    <property type="interactions" value="48"/>
</dbReference>
<dbReference type="STRING" id="9913.ENSBTAP00000065003"/>
<dbReference type="PaxDb" id="9913-ENSBTAP00000021649"/>
<dbReference type="GeneID" id="615205"/>
<dbReference type="KEGG" id="bta:615205"/>
<dbReference type="CTD" id="3034"/>
<dbReference type="VEuPathDB" id="HostDB:ENSBTAG00000016276"/>
<dbReference type="eggNOG" id="KOG0222">
    <property type="taxonomic scope" value="Eukaryota"/>
</dbReference>
<dbReference type="HOGENOM" id="CLU_014801_4_0_1"/>
<dbReference type="InParanoid" id="A7YWP4"/>
<dbReference type="OMA" id="YSLRCMP"/>
<dbReference type="OrthoDB" id="10051290at2759"/>
<dbReference type="TreeFam" id="TF313824"/>
<dbReference type="Reactome" id="R-BTA-70921">
    <property type="pathway name" value="Histidine catabolism"/>
</dbReference>
<dbReference type="UniPathway" id="UPA00379">
    <property type="reaction ID" value="UER00549"/>
</dbReference>
<dbReference type="Proteomes" id="UP000009136">
    <property type="component" value="Chromosome 5"/>
</dbReference>
<dbReference type="Bgee" id="ENSBTAG00000016276">
    <property type="expression patterns" value="Expressed in oocyte and 26 other cell types or tissues"/>
</dbReference>
<dbReference type="GO" id="GO:0005737">
    <property type="term" value="C:cytoplasm"/>
    <property type="evidence" value="ECO:0007669"/>
    <property type="project" value="InterPro"/>
</dbReference>
<dbReference type="GO" id="GO:0004397">
    <property type="term" value="F:histidine ammonia-lyase activity"/>
    <property type="evidence" value="ECO:0000318"/>
    <property type="project" value="GO_Central"/>
</dbReference>
<dbReference type="GO" id="GO:0006548">
    <property type="term" value="P:L-histidine catabolic process"/>
    <property type="evidence" value="ECO:0000318"/>
    <property type="project" value="GO_Central"/>
</dbReference>
<dbReference type="GO" id="GO:0019556">
    <property type="term" value="P:L-histidine catabolic process to glutamate and formamide"/>
    <property type="evidence" value="ECO:0007669"/>
    <property type="project" value="UniProtKB-UniPathway"/>
</dbReference>
<dbReference type="GO" id="GO:0019557">
    <property type="term" value="P:L-histidine catabolic process to glutamate and formate"/>
    <property type="evidence" value="ECO:0007669"/>
    <property type="project" value="UniProtKB-UniPathway"/>
</dbReference>
<dbReference type="CDD" id="cd00332">
    <property type="entry name" value="PAL-HAL"/>
    <property type="match status" value="1"/>
</dbReference>
<dbReference type="FunFam" id="1.10.275.10:FF:000007">
    <property type="entry name" value="Histidine ammonia-lyase"/>
    <property type="match status" value="1"/>
</dbReference>
<dbReference type="FunFam" id="1.20.200.10:FF:000003">
    <property type="entry name" value="Histidine ammonia-lyase"/>
    <property type="match status" value="1"/>
</dbReference>
<dbReference type="FunFam" id="3.10.20.90:FF:000111">
    <property type="entry name" value="Histidine ammonia-lyase"/>
    <property type="match status" value="1"/>
</dbReference>
<dbReference type="Gene3D" id="1.20.200.10">
    <property type="entry name" value="Fumarase/aspartase (Central domain)"/>
    <property type="match status" value="1"/>
</dbReference>
<dbReference type="Gene3D" id="1.10.275.10">
    <property type="entry name" value="Fumarase/aspartase (N-terminal domain)"/>
    <property type="match status" value="1"/>
</dbReference>
<dbReference type="Gene3D" id="3.10.20.90">
    <property type="entry name" value="Phosphatidylinositol 3-kinase Catalytic Subunit, Chain A, domain 1"/>
    <property type="match status" value="1"/>
</dbReference>
<dbReference type="InterPro" id="IPR001106">
    <property type="entry name" value="Aromatic_Lyase"/>
</dbReference>
<dbReference type="InterPro" id="IPR024083">
    <property type="entry name" value="Fumarase/histidase_N"/>
</dbReference>
<dbReference type="InterPro" id="IPR005921">
    <property type="entry name" value="HutH"/>
</dbReference>
<dbReference type="InterPro" id="IPR008948">
    <property type="entry name" value="L-Aspartase-like"/>
</dbReference>
<dbReference type="InterPro" id="IPR022313">
    <property type="entry name" value="Phe/His_NH3-lyase_AS"/>
</dbReference>
<dbReference type="NCBIfam" id="TIGR01225">
    <property type="entry name" value="hutH"/>
    <property type="match status" value="1"/>
</dbReference>
<dbReference type="NCBIfam" id="NF006871">
    <property type="entry name" value="PRK09367.1"/>
    <property type="match status" value="1"/>
</dbReference>
<dbReference type="PANTHER" id="PTHR10362">
    <property type="entry name" value="HISTIDINE AMMONIA-LYASE"/>
    <property type="match status" value="1"/>
</dbReference>
<dbReference type="Pfam" id="PF00221">
    <property type="entry name" value="Lyase_aromatic"/>
    <property type="match status" value="1"/>
</dbReference>
<dbReference type="SUPFAM" id="SSF48557">
    <property type="entry name" value="L-aspartase-like"/>
    <property type="match status" value="1"/>
</dbReference>
<dbReference type="PROSITE" id="PS00488">
    <property type="entry name" value="PAL_HISTIDASE"/>
    <property type="match status" value="1"/>
</dbReference>
<feature type="chain" id="PRO_0000336621" description="Histidine ammonia-lyase">
    <location>
        <begin position="1"/>
        <end position="657"/>
    </location>
</feature>
<feature type="modified residue" description="2,3-didehydroalanine (Ser)" evidence="4">
    <location>
        <position position="254"/>
    </location>
</feature>
<feature type="modified residue" description="Phosphothreonine" evidence="3">
    <location>
        <position position="396"/>
    </location>
</feature>
<feature type="modified residue" description="Phosphoserine" evidence="2">
    <location>
        <position position="635"/>
    </location>
</feature>
<feature type="modified residue" description="Phosphothreonine" evidence="3">
    <location>
        <position position="637"/>
    </location>
</feature>
<feature type="modified residue" description="Phosphoserine" evidence="3">
    <location>
        <position position="648"/>
    </location>
</feature>
<feature type="cross-link" description="5-imidazolinone (Ala-Gly)" evidence="1">
    <location>
        <begin position="253"/>
        <end position="255"/>
    </location>
</feature>
<reference key="1">
    <citation type="submission" date="2007-03" db="EMBL/GenBank/DDBJ databases">
        <authorList>
            <consortium name="NIH - Mammalian Gene Collection (MGC) project"/>
        </authorList>
    </citation>
    <scope>NUCLEOTIDE SEQUENCE [LARGE SCALE MRNA]</scope>
    <source>
        <strain>Hereford</strain>
        <tissue>Fetal skin</tissue>
    </source>
</reference>
<keyword id="KW-0369">Histidine metabolism</keyword>
<keyword id="KW-0456">Lyase</keyword>
<keyword id="KW-0597">Phosphoprotein</keyword>
<keyword id="KW-1185">Reference proteome</keyword>
<gene>
    <name type="primary">HAL</name>
</gene>
<protein>
    <recommendedName>
        <fullName>Histidine ammonia-lyase</fullName>
        <shortName>Histidase</shortName>
        <ecNumber>4.3.1.3</ecNumber>
    </recommendedName>
</protein>
<proteinExistence type="evidence at transcript level"/>
<accession>A7YWP4</accession>
<sequence length="657" mass="72291">MPRYTVHVRGEWLAVPCQDAQLTVGWLGREAVRRYIKNKPDNGGFASVDDARFLVRRCKGLGLLDNEDPLDVALEDNEFVEVVIEGDAMSPDFIPSQPEGVYLYSKYREPEKYIALDGDSLTTEDLVSLGKGHYKIKLTPTAEKRVQKSREVIDRIVEEKTVVYGITTGFGKFARTVIPVSKLEELQFNLVRSHSSGVGKPLSPERCRMLLALRINVLAKGYSGISLGTLKQVIEVFNASCLPYVPEKGTVGASGDLAPLSHLALGLIGEGKMWSPKSGWADAKYVLAAHGLKPIVLKPKEGLALINGTQMITSLGCEAVERASAIARQADIVAALTLEVLKGTTKAFDTDIHAVRPHRGQVEVAFRFRSLLDSDHHPSEIAESHRFCDRVQDAYTLRCCPQVHGVVNDTIAFVKNIITTEINSATDNPMVFASRGETISGGNFHGEYPAKALDYLAIGVHELASISERRIERLCNPSLSELPAFLVAEGGLNSGFMIAHCTAAALVSENKALCHPSSVDSLSTSAATEDHVSMGGWAARKALRVIEHVEQVLAIELLAACQGIEFLRPLKTTTPLEKVYDLVRSVVRPWIKDRFMAPDIEAAHRLLVEQKVWEVAAPYIEKYRMEHIPESRPVSPTAFSLEFLHKKSTKIPESEDL</sequence>
<name>HUTH_BOVIN</name>